<organism>
    <name type="scientific">Deinococcus deserti (strain DSM 17065 / CIP 109153 / LMG 22923 / VCD115)</name>
    <dbReference type="NCBI Taxonomy" id="546414"/>
    <lineage>
        <taxon>Bacteria</taxon>
        <taxon>Thermotogati</taxon>
        <taxon>Deinococcota</taxon>
        <taxon>Deinococci</taxon>
        <taxon>Deinococcales</taxon>
        <taxon>Deinococcaceae</taxon>
        <taxon>Deinococcus</taxon>
    </lineage>
</organism>
<gene>
    <name evidence="1" type="primary">carB</name>
    <name type="ordered locus">Deide_00700</name>
</gene>
<evidence type="ECO:0000255" key="1">
    <source>
        <dbReference type="HAMAP-Rule" id="MF_01210"/>
    </source>
</evidence>
<dbReference type="EC" id="6.3.4.16" evidence="1"/>
<dbReference type="EC" id="6.3.5.5" evidence="1"/>
<dbReference type="EMBL" id="CP001114">
    <property type="protein sequence ID" value="ACO44870.1"/>
    <property type="molecule type" value="Genomic_DNA"/>
</dbReference>
<dbReference type="RefSeq" id="WP_012691993.1">
    <property type="nucleotide sequence ID" value="NC_012526.1"/>
</dbReference>
<dbReference type="SMR" id="C1CXR4"/>
<dbReference type="STRING" id="546414.Deide_00700"/>
<dbReference type="PaxDb" id="546414-Deide_00700"/>
<dbReference type="KEGG" id="ddr:Deide_00700"/>
<dbReference type="eggNOG" id="COG0458">
    <property type="taxonomic scope" value="Bacteria"/>
</dbReference>
<dbReference type="HOGENOM" id="CLU_000513_1_0_0"/>
<dbReference type="OrthoDB" id="9804197at2"/>
<dbReference type="UniPathway" id="UPA00068">
    <property type="reaction ID" value="UER00171"/>
</dbReference>
<dbReference type="UniPathway" id="UPA00070">
    <property type="reaction ID" value="UER00115"/>
</dbReference>
<dbReference type="Proteomes" id="UP000002208">
    <property type="component" value="Chromosome"/>
</dbReference>
<dbReference type="GO" id="GO:0005737">
    <property type="term" value="C:cytoplasm"/>
    <property type="evidence" value="ECO:0007669"/>
    <property type="project" value="TreeGrafter"/>
</dbReference>
<dbReference type="GO" id="GO:0005524">
    <property type="term" value="F:ATP binding"/>
    <property type="evidence" value="ECO:0007669"/>
    <property type="project" value="UniProtKB-UniRule"/>
</dbReference>
<dbReference type="GO" id="GO:0004087">
    <property type="term" value="F:carbamoyl-phosphate synthase (ammonia) activity"/>
    <property type="evidence" value="ECO:0007669"/>
    <property type="project" value="RHEA"/>
</dbReference>
<dbReference type="GO" id="GO:0004088">
    <property type="term" value="F:carbamoyl-phosphate synthase (glutamine-hydrolyzing) activity"/>
    <property type="evidence" value="ECO:0007669"/>
    <property type="project" value="UniProtKB-UniRule"/>
</dbReference>
<dbReference type="GO" id="GO:0046872">
    <property type="term" value="F:metal ion binding"/>
    <property type="evidence" value="ECO:0007669"/>
    <property type="project" value="UniProtKB-KW"/>
</dbReference>
<dbReference type="GO" id="GO:0044205">
    <property type="term" value="P:'de novo' UMP biosynthetic process"/>
    <property type="evidence" value="ECO:0007669"/>
    <property type="project" value="UniProtKB-UniRule"/>
</dbReference>
<dbReference type="GO" id="GO:0006541">
    <property type="term" value="P:glutamine metabolic process"/>
    <property type="evidence" value="ECO:0007669"/>
    <property type="project" value="TreeGrafter"/>
</dbReference>
<dbReference type="GO" id="GO:0006526">
    <property type="term" value="P:L-arginine biosynthetic process"/>
    <property type="evidence" value="ECO:0007669"/>
    <property type="project" value="UniProtKB-UniRule"/>
</dbReference>
<dbReference type="FunFam" id="1.10.1030.10:FF:000002">
    <property type="entry name" value="Carbamoyl-phosphate synthase large chain"/>
    <property type="match status" value="1"/>
</dbReference>
<dbReference type="FunFam" id="3.30.470.20:FF:000007">
    <property type="entry name" value="Carbamoyl-phosphate synthase large chain"/>
    <property type="match status" value="1"/>
</dbReference>
<dbReference type="FunFam" id="3.30.470.20:FF:000013">
    <property type="entry name" value="Carbamoyl-phosphate synthase large chain"/>
    <property type="match status" value="1"/>
</dbReference>
<dbReference type="FunFam" id="3.40.50.20:FF:000001">
    <property type="entry name" value="Carbamoyl-phosphate synthase large chain"/>
    <property type="match status" value="1"/>
</dbReference>
<dbReference type="FunFam" id="3.40.50.20:FF:000003">
    <property type="entry name" value="Carbamoyl-phosphate synthase large chain"/>
    <property type="match status" value="1"/>
</dbReference>
<dbReference type="Gene3D" id="3.40.50.20">
    <property type="match status" value="2"/>
</dbReference>
<dbReference type="Gene3D" id="3.30.470.20">
    <property type="entry name" value="ATP-grasp fold, B domain"/>
    <property type="match status" value="2"/>
</dbReference>
<dbReference type="Gene3D" id="1.10.1030.10">
    <property type="entry name" value="Carbamoyl-phosphate synthetase, large subunit oligomerisation domain"/>
    <property type="match status" value="1"/>
</dbReference>
<dbReference type="HAMAP" id="MF_01210_B">
    <property type="entry name" value="CPSase_L_chain_B"/>
    <property type="match status" value="1"/>
</dbReference>
<dbReference type="InterPro" id="IPR011761">
    <property type="entry name" value="ATP-grasp"/>
</dbReference>
<dbReference type="InterPro" id="IPR006275">
    <property type="entry name" value="CarbamoylP_synth_lsu"/>
</dbReference>
<dbReference type="InterPro" id="IPR005480">
    <property type="entry name" value="CarbamoylP_synth_lsu_oligo"/>
</dbReference>
<dbReference type="InterPro" id="IPR036897">
    <property type="entry name" value="CarbamoylP_synth_lsu_oligo_sf"/>
</dbReference>
<dbReference type="InterPro" id="IPR005479">
    <property type="entry name" value="CbamoylP_synth_lsu-like_ATP-bd"/>
</dbReference>
<dbReference type="InterPro" id="IPR005483">
    <property type="entry name" value="CbamoylP_synth_lsu_CPSase_dom"/>
</dbReference>
<dbReference type="InterPro" id="IPR011607">
    <property type="entry name" value="MGS-like_dom"/>
</dbReference>
<dbReference type="InterPro" id="IPR016185">
    <property type="entry name" value="PreATP-grasp_dom_sf"/>
</dbReference>
<dbReference type="NCBIfam" id="TIGR01369">
    <property type="entry name" value="CPSaseII_lrg"/>
    <property type="match status" value="1"/>
</dbReference>
<dbReference type="NCBIfam" id="NF003671">
    <property type="entry name" value="PRK05294.1"/>
    <property type="match status" value="1"/>
</dbReference>
<dbReference type="NCBIfam" id="NF009455">
    <property type="entry name" value="PRK12815.1"/>
    <property type="match status" value="1"/>
</dbReference>
<dbReference type="PANTHER" id="PTHR11405:SF53">
    <property type="entry name" value="CARBAMOYL-PHOSPHATE SYNTHASE [AMMONIA], MITOCHONDRIAL"/>
    <property type="match status" value="1"/>
</dbReference>
<dbReference type="PANTHER" id="PTHR11405">
    <property type="entry name" value="CARBAMOYLTRANSFERASE FAMILY MEMBER"/>
    <property type="match status" value="1"/>
</dbReference>
<dbReference type="Pfam" id="PF02786">
    <property type="entry name" value="CPSase_L_D2"/>
    <property type="match status" value="2"/>
</dbReference>
<dbReference type="Pfam" id="PF02787">
    <property type="entry name" value="CPSase_L_D3"/>
    <property type="match status" value="1"/>
</dbReference>
<dbReference type="PRINTS" id="PR00098">
    <property type="entry name" value="CPSASE"/>
</dbReference>
<dbReference type="SMART" id="SM01096">
    <property type="entry name" value="CPSase_L_D3"/>
    <property type="match status" value="1"/>
</dbReference>
<dbReference type="SUPFAM" id="SSF48108">
    <property type="entry name" value="Carbamoyl phosphate synthetase, large subunit connection domain"/>
    <property type="match status" value="1"/>
</dbReference>
<dbReference type="SUPFAM" id="SSF56059">
    <property type="entry name" value="Glutathione synthetase ATP-binding domain-like"/>
    <property type="match status" value="2"/>
</dbReference>
<dbReference type="SUPFAM" id="SSF52440">
    <property type="entry name" value="PreATP-grasp domain"/>
    <property type="match status" value="2"/>
</dbReference>
<dbReference type="PROSITE" id="PS50975">
    <property type="entry name" value="ATP_GRASP"/>
    <property type="match status" value="2"/>
</dbReference>
<dbReference type="PROSITE" id="PS00867">
    <property type="entry name" value="CPSASE_2"/>
    <property type="match status" value="2"/>
</dbReference>
<dbReference type="PROSITE" id="PS51855">
    <property type="entry name" value="MGS"/>
    <property type="match status" value="1"/>
</dbReference>
<protein>
    <recommendedName>
        <fullName evidence="1">Carbamoyl phosphate synthase large chain</fullName>
        <ecNumber evidence="1">6.3.4.16</ecNumber>
        <ecNumber evidence="1">6.3.5.5</ecNumber>
    </recommendedName>
    <alternativeName>
        <fullName evidence="1">Carbamoyl phosphate synthetase ammonia chain</fullName>
    </alternativeName>
</protein>
<proteinExistence type="inferred from homology"/>
<feature type="chain" id="PRO_1000213873" description="Carbamoyl phosphate synthase large chain">
    <location>
        <begin position="1"/>
        <end position="1029"/>
    </location>
</feature>
<feature type="domain" description="ATP-grasp 1" evidence="1">
    <location>
        <begin position="133"/>
        <end position="328"/>
    </location>
</feature>
<feature type="domain" description="ATP-grasp 2" evidence="1">
    <location>
        <begin position="671"/>
        <end position="863"/>
    </location>
</feature>
<feature type="domain" description="MGS-like" evidence="1">
    <location>
        <begin position="930"/>
        <end position="1028"/>
    </location>
</feature>
<feature type="region of interest" description="Carboxyphosphate synthetic domain" evidence="1">
    <location>
        <begin position="1"/>
        <end position="402"/>
    </location>
</feature>
<feature type="region of interest" description="Oligomerization domain" evidence="1">
    <location>
        <begin position="403"/>
        <end position="544"/>
    </location>
</feature>
<feature type="region of interest" description="Carbamoyl phosphate synthetic domain" evidence="1">
    <location>
        <begin position="545"/>
        <end position="929"/>
    </location>
</feature>
<feature type="region of interest" description="Allosteric domain" evidence="1">
    <location>
        <begin position="930"/>
        <end position="1029"/>
    </location>
</feature>
<feature type="binding site" evidence="1">
    <location>
        <position position="129"/>
    </location>
    <ligand>
        <name>ATP</name>
        <dbReference type="ChEBI" id="CHEBI:30616"/>
        <label>1</label>
    </ligand>
</feature>
<feature type="binding site" evidence="1">
    <location>
        <position position="169"/>
    </location>
    <ligand>
        <name>ATP</name>
        <dbReference type="ChEBI" id="CHEBI:30616"/>
        <label>1</label>
    </ligand>
</feature>
<feature type="binding site" evidence="1">
    <location>
        <position position="175"/>
    </location>
    <ligand>
        <name>ATP</name>
        <dbReference type="ChEBI" id="CHEBI:30616"/>
        <label>1</label>
    </ligand>
</feature>
<feature type="binding site" evidence="1">
    <location>
        <position position="176"/>
    </location>
    <ligand>
        <name>ATP</name>
        <dbReference type="ChEBI" id="CHEBI:30616"/>
        <label>1</label>
    </ligand>
</feature>
<feature type="binding site" evidence="1">
    <location>
        <position position="208"/>
    </location>
    <ligand>
        <name>ATP</name>
        <dbReference type="ChEBI" id="CHEBI:30616"/>
        <label>1</label>
    </ligand>
</feature>
<feature type="binding site" evidence="1">
    <location>
        <position position="210"/>
    </location>
    <ligand>
        <name>ATP</name>
        <dbReference type="ChEBI" id="CHEBI:30616"/>
        <label>1</label>
    </ligand>
</feature>
<feature type="binding site" evidence="1">
    <location>
        <position position="215"/>
    </location>
    <ligand>
        <name>ATP</name>
        <dbReference type="ChEBI" id="CHEBI:30616"/>
        <label>1</label>
    </ligand>
</feature>
<feature type="binding site" evidence="1">
    <location>
        <position position="241"/>
    </location>
    <ligand>
        <name>ATP</name>
        <dbReference type="ChEBI" id="CHEBI:30616"/>
        <label>1</label>
    </ligand>
</feature>
<feature type="binding site" evidence="1">
    <location>
        <position position="242"/>
    </location>
    <ligand>
        <name>ATP</name>
        <dbReference type="ChEBI" id="CHEBI:30616"/>
        <label>1</label>
    </ligand>
</feature>
<feature type="binding site" evidence="1">
    <location>
        <position position="243"/>
    </location>
    <ligand>
        <name>ATP</name>
        <dbReference type="ChEBI" id="CHEBI:30616"/>
        <label>1</label>
    </ligand>
</feature>
<feature type="binding site" evidence="1">
    <location>
        <position position="285"/>
    </location>
    <ligand>
        <name>ATP</name>
        <dbReference type="ChEBI" id="CHEBI:30616"/>
        <label>1</label>
    </ligand>
</feature>
<feature type="binding site" evidence="1">
    <location>
        <position position="285"/>
    </location>
    <ligand>
        <name>Mg(2+)</name>
        <dbReference type="ChEBI" id="CHEBI:18420"/>
        <label>1</label>
    </ligand>
</feature>
<feature type="binding site" evidence="1">
    <location>
        <position position="285"/>
    </location>
    <ligand>
        <name>Mn(2+)</name>
        <dbReference type="ChEBI" id="CHEBI:29035"/>
        <label>1</label>
    </ligand>
</feature>
<feature type="binding site" evidence="1">
    <location>
        <position position="299"/>
    </location>
    <ligand>
        <name>ATP</name>
        <dbReference type="ChEBI" id="CHEBI:30616"/>
        <label>1</label>
    </ligand>
</feature>
<feature type="binding site" evidence="1">
    <location>
        <position position="299"/>
    </location>
    <ligand>
        <name>Mg(2+)</name>
        <dbReference type="ChEBI" id="CHEBI:18420"/>
        <label>1</label>
    </ligand>
</feature>
<feature type="binding site" evidence="1">
    <location>
        <position position="299"/>
    </location>
    <ligand>
        <name>Mg(2+)</name>
        <dbReference type="ChEBI" id="CHEBI:18420"/>
        <label>2</label>
    </ligand>
</feature>
<feature type="binding site" evidence="1">
    <location>
        <position position="299"/>
    </location>
    <ligand>
        <name>Mn(2+)</name>
        <dbReference type="ChEBI" id="CHEBI:29035"/>
        <label>1</label>
    </ligand>
</feature>
<feature type="binding site" evidence="1">
    <location>
        <position position="299"/>
    </location>
    <ligand>
        <name>Mn(2+)</name>
        <dbReference type="ChEBI" id="CHEBI:29035"/>
        <label>2</label>
    </ligand>
</feature>
<feature type="binding site" evidence="1">
    <location>
        <position position="301"/>
    </location>
    <ligand>
        <name>Mg(2+)</name>
        <dbReference type="ChEBI" id="CHEBI:18420"/>
        <label>2</label>
    </ligand>
</feature>
<feature type="binding site" evidence="1">
    <location>
        <position position="301"/>
    </location>
    <ligand>
        <name>Mn(2+)</name>
        <dbReference type="ChEBI" id="CHEBI:29035"/>
        <label>2</label>
    </ligand>
</feature>
<feature type="binding site" evidence="1">
    <location>
        <position position="707"/>
    </location>
    <ligand>
        <name>ATP</name>
        <dbReference type="ChEBI" id="CHEBI:30616"/>
        <label>2</label>
    </ligand>
</feature>
<feature type="binding site" evidence="1">
    <location>
        <position position="747"/>
    </location>
    <ligand>
        <name>ATP</name>
        <dbReference type="ChEBI" id="CHEBI:30616"/>
        <label>2</label>
    </ligand>
</feature>
<feature type="binding site" evidence="1">
    <location>
        <position position="749"/>
    </location>
    <ligand>
        <name>ATP</name>
        <dbReference type="ChEBI" id="CHEBI:30616"/>
        <label>2</label>
    </ligand>
</feature>
<feature type="binding site" evidence="1">
    <location>
        <position position="754"/>
    </location>
    <ligand>
        <name>ATP</name>
        <dbReference type="ChEBI" id="CHEBI:30616"/>
        <label>2</label>
    </ligand>
</feature>
<feature type="binding site" evidence="1">
    <location>
        <position position="779"/>
    </location>
    <ligand>
        <name>ATP</name>
        <dbReference type="ChEBI" id="CHEBI:30616"/>
        <label>2</label>
    </ligand>
</feature>
<feature type="binding site" evidence="1">
    <location>
        <position position="780"/>
    </location>
    <ligand>
        <name>ATP</name>
        <dbReference type="ChEBI" id="CHEBI:30616"/>
        <label>2</label>
    </ligand>
</feature>
<feature type="binding site" evidence="1">
    <location>
        <position position="781"/>
    </location>
    <ligand>
        <name>ATP</name>
        <dbReference type="ChEBI" id="CHEBI:30616"/>
        <label>2</label>
    </ligand>
</feature>
<feature type="binding site" evidence="1">
    <location>
        <position position="782"/>
    </location>
    <ligand>
        <name>ATP</name>
        <dbReference type="ChEBI" id="CHEBI:30616"/>
        <label>2</label>
    </ligand>
</feature>
<feature type="binding site" evidence="1">
    <location>
        <position position="822"/>
    </location>
    <ligand>
        <name>ATP</name>
        <dbReference type="ChEBI" id="CHEBI:30616"/>
        <label>2</label>
    </ligand>
</feature>
<feature type="binding site" evidence="1">
    <location>
        <position position="822"/>
    </location>
    <ligand>
        <name>Mg(2+)</name>
        <dbReference type="ChEBI" id="CHEBI:18420"/>
        <label>3</label>
    </ligand>
</feature>
<feature type="binding site" evidence="1">
    <location>
        <position position="822"/>
    </location>
    <ligand>
        <name>Mn(2+)</name>
        <dbReference type="ChEBI" id="CHEBI:29035"/>
        <label>3</label>
    </ligand>
</feature>
<feature type="binding site" evidence="1">
    <location>
        <position position="834"/>
    </location>
    <ligand>
        <name>ATP</name>
        <dbReference type="ChEBI" id="CHEBI:30616"/>
        <label>2</label>
    </ligand>
</feature>
<feature type="binding site" evidence="1">
    <location>
        <position position="834"/>
    </location>
    <ligand>
        <name>Mg(2+)</name>
        <dbReference type="ChEBI" id="CHEBI:18420"/>
        <label>3</label>
    </ligand>
</feature>
<feature type="binding site" evidence="1">
    <location>
        <position position="834"/>
    </location>
    <ligand>
        <name>Mg(2+)</name>
        <dbReference type="ChEBI" id="CHEBI:18420"/>
        <label>4</label>
    </ligand>
</feature>
<feature type="binding site" evidence="1">
    <location>
        <position position="834"/>
    </location>
    <ligand>
        <name>Mn(2+)</name>
        <dbReference type="ChEBI" id="CHEBI:29035"/>
        <label>3</label>
    </ligand>
</feature>
<feature type="binding site" evidence="1">
    <location>
        <position position="834"/>
    </location>
    <ligand>
        <name>Mn(2+)</name>
        <dbReference type="ChEBI" id="CHEBI:29035"/>
        <label>4</label>
    </ligand>
</feature>
<feature type="binding site" evidence="1">
    <location>
        <position position="836"/>
    </location>
    <ligand>
        <name>Mg(2+)</name>
        <dbReference type="ChEBI" id="CHEBI:18420"/>
        <label>4</label>
    </ligand>
</feature>
<feature type="binding site" evidence="1">
    <location>
        <position position="836"/>
    </location>
    <ligand>
        <name>Mn(2+)</name>
        <dbReference type="ChEBI" id="CHEBI:29035"/>
        <label>4</label>
    </ligand>
</feature>
<comment type="function">
    <text evidence="1">Large subunit of the glutamine-dependent carbamoyl phosphate synthetase (CPSase). CPSase catalyzes the formation of carbamoyl phosphate from the ammonia moiety of glutamine, carbonate, and phosphate donated by ATP, constituting the first step of 2 biosynthetic pathways, one leading to arginine and/or urea and the other to pyrimidine nucleotides. The large subunit (synthetase) binds the substrates ammonia (free or transferred from glutamine from the small subunit), hydrogencarbonate and ATP and carries out an ATP-coupled ligase reaction, activating hydrogencarbonate by forming carboxy phosphate which reacts with ammonia to form carbamoyl phosphate.</text>
</comment>
<comment type="catalytic activity">
    <reaction evidence="1">
        <text>hydrogencarbonate + L-glutamine + 2 ATP + H2O = carbamoyl phosphate + L-glutamate + 2 ADP + phosphate + 2 H(+)</text>
        <dbReference type="Rhea" id="RHEA:18633"/>
        <dbReference type="ChEBI" id="CHEBI:15377"/>
        <dbReference type="ChEBI" id="CHEBI:15378"/>
        <dbReference type="ChEBI" id="CHEBI:17544"/>
        <dbReference type="ChEBI" id="CHEBI:29985"/>
        <dbReference type="ChEBI" id="CHEBI:30616"/>
        <dbReference type="ChEBI" id="CHEBI:43474"/>
        <dbReference type="ChEBI" id="CHEBI:58228"/>
        <dbReference type="ChEBI" id="CHEBI:58359"/>
        <dbReference type="ChEBI" id="CHEBI:456216"/>
        <dbReference type="EC" id="6.3.5.5"/>
    </reaction>
</comment>
<comment type="catalytic activity">
    <molecule>Carbamoyl phosphate synthase large chain</molecule>
    <reaction evidence="1">
        <text>hydrogencarbonate + NH4(+) + 2 ATP = carbamoyl phosphate + 2 ADP + phosphate + 2 H(+)</text>
        <dbReference type="Rhea" id="RHEA:18029"/>
        <dbReference type="ChEBI" id="CHEBI:15378"/>
        <dbReference type="ChEBI" id="CHEBI:17544"/>
        <dbReference type="ChEBI" id="CHEBI:28938"/>
        <dbReference type="ChEBI" id="CHEBI:30616"/>
        <dbReference type="ChEBI" id="CHEBI:43474"/>
        <dbReference type="ChEBI" id="CHEBI:58228"/>
        <dbReference type="ChEBI" id="CHEBI:456216"/>
        <dbReference type="EC" id="6.3.4.16"/>
    </reaction>
</comment>
<comment type="cofactor">
    <cofactor evidence="1">
        <name>Mg(2+)</name>
        <dbReference type="ChEBI" id="CHEBI:18420"/>
    </cofactor>
    <cofactor evidence="1">
        <name>Mn(2+)</name>
        <dbReference type="ChEBI" id="CHEBI:29035"/>
    </cofactor>
    <text evidence="1">Binds 4 Mg(2+) or Mn(2+) ions per subunit.</text>
</comment>
<comment type="pathway">
    <text evidence="1">Amino-acid biosynthesis; L-arginine biosynthesis; carbamoyl phosphate from bicarbonate: step 1/1.</text>
</comment>
<comment type="pathway">
    <text evidence="1">Pyrimidine metabolism; UMP biosynthesis via de novo pathway; (S)-dihydroorotate from bicarbonate: step 1/3.</text>
</comment>
<comment type="subunit">
    <text evidence="1">Composed of two chains; the small (or glutamine) chain promotes the hydrolysis of glutamine to ammonia, which is used by the large (or ammonia) chain to synthesize carbamoyl phosphate. Tetramer of heterodimers (alpha,beta)4.</text>
</comment>
<comment type="domain">
    <text evidence="1">The large subunit is composed of 2 ATP-grasp domains that are involved in binding the 2 ATP molecules needed for carbamoyl phosphate synthesis. The N-terminal ATP-grasp domain (referred to as the carboxyphosphate synthetic component) catalyzes the ATP-dependent phosphorylation of hydrogencarbonate to carboxyphosphate and the subsequent nucleophilic attack by ammonia to form a carbamate intermediate. The C-terminal ATP-grasp domain (referred to as the carbamoyl phosphate synthetic component) then catalyzes the phosphorylation of carbamate with the second ATP to form the end product carbamoyl phosphate. The reactive and unstable enzyme intermediates are sequentially channeled from one active site to the next through the interior of the protein over a distance of at least 96 A.</text>
</comment>
<comment type="similarity">
    <text evidence="1">Belongs to the CarB family.</text>
</comment>
<name>CARB_DEIDV</name>
<reference key="1">
    <citation type="journal article" date="2009" name="PLoS Genet.">
        <title>Alliance of proteomics and genomics to unravel the specificities of Sahara bacterium Deinococcus deserti.</title>
        <authorList>
            <person name="de Groot A."/>
            <person name="Dulermo R."/>
            <person name="Ortet P."/>
            <person name="Blanchard L."/>
            <person name="Guerin P."/>
            <person name="Fernandez B."/>
            <person name="Vacherie B."/>
            <person name="Dossat C."/>
            <person name="Jolivet E."/>
            <person name="Siguier P."/>
            <person name="Chandler M."/>
            <person name="Barakat M."/>
            <person name="Dedieu A."/>
            <person name="Barbe V."/>
            <person name="Heulin T."/>
            <person name="Sommer S."/>
            <person name="Achouak W."/>
            <person name="Armengaud J."/>
        </authorList>
    </citation>
    <scope>NUCLEOTIDE SEQUENCE [LARGE SCALE GENOMIC DNA]</scope>
    <source>
        <strain>DSM 17065 / CIP 109153 / LMG 22923 / VCD115</strain>
    </source>
</reference>
<keyword id="KW-0028">Amino-acid biosynthesis</keyword>
<keyword id="KW-0055">Arginine biosynthesis</keyword>
<keyword id="KW-0067">ATP-binding</keyword>
<keyword id="KW-0436">Ligase</keyword>
<keyword id="KW-0460">Magnesium</keyword>
<keyword id="KW-0464">Manganese</keyword>
<keyword id="KW-0479">Metal-binding</keyword>
<keyword id="KW-0547">Nucleotide-binding</keyword>
<keyword id="KW-0665">Pyrimidine biosynthesis</keyword>
<keyword id="KW-1185">Reference proteome</keyword>
<keyword id="KW-0677">Repeat</keyword>
<accession>C1CXR4</accession>
<sequence>MPKRTDLQTILILGSGPIQIGQAAEFDYSGTQALKALRGEGYRVVLVNSNPATIMTDPDLADATYLEPLTPEFVEKIIALEKPDAILPTLGGQTALNLAMELHERGTLEKYGVELIGAGVEAIKKGEDRELFQAAMKKIGVETARGKMVHSMEEAVEYQKEIGLPIVIRPSFTLGGTGGGIAHTYEEFLAITEGGLRDSPVTSVLLEESILGWKEYELEVMRDTADTVIIITSIENFDPMGVHTGDSITVAPAQTLSDVEYQRLRNQSLAIIREIGVATGGSNIQFAVNPDNGRVIVIEMNPRVSRSSALASKATGFPIAKIAALLAVGYHLDELPNDITRVTPASFEPSIDYVVTKIPRFAFEKFPGTSDHLGTQMRSVGEVMAIGRTFKESLQKALRSTESDIRGVYAEMDEAGLRALLYPNPRRIEAVIELLRRGESIDALFDATKIDRWFLEQIKEIIDAEHELLELGPISEWKYEYWREVKRLGFSDARIGEIVGLSELQVRQLRKAARATPVYKTVDTCAAEFEAYTPYHYSTYEWEDEVTGTDKPKVVILGSGPNRIGQGVEFDYATVHAVWALQEAGYETIMVNSNPETVSTDYDTADRLYFEPLTFEDVMNIVDHEKPVGVIVQLGGQTPLKLAKKLADAGAPIIGTSPETIHEAEDRASFNALCERLGLSQPRGKVAETPEQARQLAAELGFPLMARPSYVLGGRAMRTVRSMEELVTYLDEVYAAVEGQPSILLDQFLEGALELDVDTLCDGERAVVAGIMEHVEAAGVHSGDSACVLPPVNLSAELLARVKADTERLALELGVRGLMNVQWAVKDGTAYILEANPRASRTVPFVSKAVNHPLAKSAARIAVGHTLEQIGLTETPEAAMYSVKEVHLPFLKFKGVSPILGPEMKSTGESMGIDADPYLAFYRAQLGAKSYLPLSGTALLLGDGLDEVASTLQGAGLNVIREQDGNTLPDLLIDVTGSPLLRTALERGVPIVSTREAAVWTSKAIAAAQGSELRVRSLQDWQTQEAVAG</sequence>